<protein>
    <recommendedName>
        <fullName evidence="1">Serine hydroxymethyltransferase</fullName>
        <shortName evidence="1">SHMT</shortName>
        <shortName evidence="1">Serine methylase</shortName>
        <ecNumber evidence="1">2.1.2.1</ecNumber>
    </recommendedName>
</protein>
<keyword id="KW-0028">Amino-acid biosynthesis</keyword>
<keyword id="KW-0963">Cytoplasm</keyword>
<keyword id="KW-0554">One-carbon metabolism</keyword>
<keyword id="KW-0663">Pyridoxal phosphate</keyword>
<keyword id="KW-1185">Reference proteome</keyword>
<keyword id="KW-0808">Transferase</keyword>
<feature type="chain" id="PRO_0000234975" description="Serine hydroxymethyltransferase">
    <location>
        <begin position="1"/>
        <end position="412"/>
    </location>
</feature>
<feature type="binding site" evidence="1">
    <location>
        <position position="117"/>
    </location>
    <ligand>
        <name>(6S)-5,6,7,8-tetrahydrofolate</name>
        <dbReference type="ChEBI" id="CHEBI:57453"/>
    </ligand>
</feature>
<feature type="binding site" evidence="1">
    <location>
        <begin position="121"/>
        <end position="123"/>
    </location>
    <ligand>
        <name>(6S)-5,6,7,8-tetrahydrofolate</name>
        <dbReference type="ChEBI" id="CHEBI:57453"/>
    </ligand>
</feature>
<feature type="binding site" evidence="1">
    <location>
        <begin position="349"/>
        <end position="351"/>
    </location>
    <ligand>
        <name>(6S)-5,6,7,8-tetrahydrofolate</name>
        <dbReference type="ChEBI" id="CHEBI:57453"/>
    </ligand>
</feature>
<feature type="site" description="Plays an important role in substrate specificity" evidence="1">
    <location>
        <position position="225"/>
    </location>
</feature>
<feature type="modified residue" description="N6-(pyridoxal phosphate)lysine" evidence="1">
    <location>
        <position position="226"/>
    </location>
</feature>
<accession>Q30YL7</accession>
<proteinExistence type="inferred from homology"/>
<organism>
    <name type="scientific">Oleidesulfovibrio alaskensis (strain ATCC BAA-1058 / DSM 17464 / G20)</name>
    <name type="common">Desulfovibrio alaskensis</name>
    <dbReference type="NCBI Taxonomy" id="207559"/>
    <lineage>
        <taxon>Bacteria</taxon>
        <taxon>Pseudomonadati</taxon>
        <taxon>Thermodesulfobacteriota</taxon>
        <taxon>Desulfovibrionia</taxon>
        <taxon>Desulfovibrionales</taxon>
        <taxon>Desulfovibrionaceae</taxon>
        <taxon>Oleidesulfovibrio</taxon>
    </lineage>
</organism>
<comment type="function">
    <text evidence="1">Catalyzes the reversible interconversion of serine and glycine with tetrahydrofolate (THF) serving as the one-carbon carrier. This reaction serves as the major source of one-carbon groups required for the biosynthesis of purines, thymidylate, methionine, and other important biomolecules. Also exhibits THF-independent aldolase activity toward beta-hydroxyamino acids, producing glycine and aldehydes, via a retro-aldol mechanism.</text>
</comment>
<comment type="catalytic activity">
    <reaction evidence="1">
        <text>(6R)-5,10-methylene-5,6,7,8-tetrahydrofolate + glycine + H2O = (6S)-5,6,7,8-tetrahydrofolate + L-serine</text>
        <dbReference type="Rhea" id="RHEA:15481"/>
        <dbReference type="ChEBI" id="CHEBI:15377"/>
        <dbReference type="ChEBI" id="CHEBI:15636"/>
        <dbReference type="ChEBI" id="CHEBI:33384"/>
        <dbReference type="ChEBI" id="CHEBI:57305"/>
        <dbReference type="ChEBI" id="CHEBI:57453"/>
        <dbReference type="EC" id="2.1.2.1"/>
    </reaction>
</comment>
<comment type="cofactor">
    <cofactor evidence="1">
        <name>pyridoxal 5'-phosphate</name>
        <dbReference type="ChEBI" id="CHEBI:597326"/>
    </cofactor>
</comment>
<comment type="pathway">
    <text evidence="1">One-carbon metabolism; tetrahydrofolate interconversion.</text>
</comment>
<comment type="pathway">
    <text evidence="1">Amino-acid biosynthesis; glycine biosynthesis; glycine from L-serine: step 1/1.</text>
</comment>
<comment type="subunit">
    <text evidence="1">Homodimer.</text>
</comment>
<comment type="subcellular location">
    <subcellularLocation>
        <location evidence="1">Cytoplasm</location>
    </subcellularLocation>
</comment>
<comment type="similarity">
    <text evidence="1">Belongs to the SHMT family.</text>
</comment>
<gene>
    <name evidence="1" type="primary">glyA</name>
    <name type="ordered locus">Dde_2432</name>
</gene>
<evidence type="ECO:0000255" key="1">
    <source>
        <dbReference type="HAMAP-Rule" id="MF_00051"/>
    </source>
</evidence>
<reference key="1">
    <citation type="journal article" date="2011" name="J. Bacteriol.">
        <title>Complete genome sequence and updated annotation of Desulfovibrio alaskensis G20.</title>
        <authorList>
            <person name="Hauser L.J."/>
            <person name="Land M.L."/>
            <person name="Brown S.D."/>
            <person name="Larimer F."/>
            <person name="Keller K.L."/>
            <person name="Rapp-Giles B.J."/>
            <person name="Price M.N."/>
            <person name="Lin M."/>
            <person name="Bruce D.C."/>
            <person name="Detter J.C."/>
            <person name="Tapia R."/>
            <person name="Han C.S."/>
            <person name="Goodwin L.A."/>
            <person name="Cheng J.F."/>
            <person name="Pitluck S."/>
            <person name="Copeland A."/>
            <person name="Lucas S."/>
            <person name="Nolan M."/>
            <person name="Lapidus A.L."/>
            <person name="Palumbo A.V."/>
            <person name="Wall J.D."/>
        </authorList>
    </citation>
    <scope>NUCLEOTIDE SEQUENCE [LARGE SCALE GENOMIC DNA]</scope>
    <source>
        <strain>ATCC BAA-1058 / DSM 17464 / G20</strain>
    </source>
</reference>
<dbReference type="EC" id="2.1.2.1" evidence="1"/>
<dbReference type="EMBL" id="CP000112">
    <property type="protein sequence ID" value="ABB39229.1"/>
    <property type="molecule type" value="Genomic_DNA"/>
</dbReference>
<dbReference type="RefSeq" id="WP_011368298.1">
    <property type="nucleotide sequence ID" value="NC_007519.1"/>
</dbReference>
<dbReference type="SMR" id="Q30YL7"/>
<dbReference type="STRING" id="207559.Dde_2432"/>
<dbReference type="KEGG" id="dde:Dde_2432"/>
<dbReference type="eggNOG" id="COG0112">
    <property type="taxonomic scope" value="Bacteria"/>
</dbReference>
<dbReference type="HOGENOM" id="CLU_022477_2_1_7"/>
<dbReference type="UniPathway" id="UPA00193"/>
<dbReference type="UniPathway" id="UPA00288">
    <property type="reaction ID" value="UER01023"/>
</dbReference>
<dbReference type="Proteomes" id="UP000002710">
    <property type="component" value="Chromosome"/>
</dbReference>
<dbReference type="GO" id="GO:0005829">
    <property type="term" value="C:cytosol"/>
    <property type="evidence" value="ECO:0007669"/>
    <property type="project" value="TreeGrafter"/>
</dbReference>
<dbReference type="GO" id="GO:0004372">
    <property type="term" value="F:glycine hydroxymethyltransferase activity"/>
    <property type="evidence" value="ECO:0007669"/>
    <property type="project" value="UniProtKB-UniRule"/>
</dbReference>
<dbReference type="GO" id="GO:0030170">
    <property type="term" value="F:pyridoxal phosphate binding"/>
    <property type="evidence" value="ECO:0007669"/>
    <property type="project" value="UniProtKB-UniRule"/>
</dbReference>
<dbReference type="GO" id="GO:0019264">
    <property type="term" value="P:glycine biosynthetic process from serine"/>
    <property type="evidence" value="ECO:0007669"/>
    <property type="project" value="UniProtKB-UniRule"/>
</dbReference>
<dbReference type="GO" id="GO:0035999">
    <property type="term" value="P:tetrahydrofolate interconversion"/>
    <property type="evidence" value="ECO:0007669"/>
    <property type="project" value="UniProtKB-UniRule"/>
</dbReference>
<dbReference type="CDD" id="cd00378">
    <property type="entry name" value="SHMT"/>
    <property type="match status" value="1"/>
</dbReference>
<dbReference type="FunFam" id="3.40.640.10:FF:000001">
    <property type="entry name" value="Serine hydroxymethyltransferase"/>
    <property type="match status" value="1"/>
</dbReference>
<dbReference type="FunFam" id="3.90.1150.10:FF:000003">
    <property type="entry name" value="Serine hydroxymethyltransferase"/>
    <property type="match status" value="1"/>
</dbReference>
<dbReference type="Gene3D" id="3.90.1150.10">
    <property type="entry name" value="Aspartate Aminotransferase, domain 1"/>
    <property type="match status" value="1"/>
</dbReference>
<dbReference type="Gene3D" id="3.40.640.10">
    <property type="entry name" value="Type I PLP-dependent aspartate aminotransferase-like (Major domain)"/>
    <property type="match status" value="1"/>
</dbReference>
<dbReference type="HAMAP" id="MF_00051">
    <property type="entry name" value="SHMT"/>
    <property type="match status" value="1"/>
</dbReference>
<dbReference type="InterPro" id="IPR015424">
    <property type="entry name" value="PyrdxlP-dep_Trfase"/>
</dbReference>
<dbReference type="InterPro" id="IPR015421">
    <property type="entry name" value="PyrdxlP-dep_Trfase_major"/>
</dbReference>
<dbReference type="InterPro" id="IPR015422">
    <property type="entry name" value="PyrdxlP-dep_Trfase_small"/>
</dbReference>
<dbReference type="InterPro" id="IPR001085">
    <property type="entry name" value="Ser_HO-MeTrfase"/>
</dbReference>
<dbReference type="InterPro" id="IPR049943">
    <property type="entry name" value="Ser_HO-MeTrfase-like"/>
</dbReference>
<dbReference type="InterPro" id="IPR019798">
    <property type="entry name" value="Ser_HO-MeTrfase_PLP_BS"/>
</dbReference>
<dbReference type="InterPro" id="IPR039429">
    <property type="entry name" value="SHMT-like_dom"/>
</dbReference>
<dbReference type="NCBIfam" id="NF000586">
    <property type="entry name" value="PRK00011.1"/>
    <property type="match status" value="1"/>
</dbReference>
<dbReference type="PANTHER" id="PTHR11680">
    <property type="entry name" value="SERINE HYDROXYMETHYLTRANSFERASE"/>
    <property type="match status" value="1"/>
</dbReference>
<dbReference type="PANTHER" id="PTHR11680:SF50">
    <property type="entry name" value="SERINE HYDROXYMETHYLTRANSFERASE"/>
    <property type="match status" value="1"/>
</dbReference>
<dbReference type="Pfam" id="PF00464">
    <property type="entry name" value="SHMT"/>
    <property type="match status" value="1"/>
</dbReference>
<dbReference type="PIRSF" id="PIRSF000412">
    <property type="entry name" value="SHMT"/>
    <property type="match status" value="1"/>
</dbReference>
<dbReference type="SUPFAM" id="SSF53383">
    <property type="entry name" value="PLP-dependent transferases"/>
    <property type="match status" value="1"/>
</dbReference>
<dbReference type="PROSITE" id="PS00096">
    <property type="entry name" value="SHMT"/>
    <property type="match status" value="1"/>
</dbReference>
<sequence>MDELLIQDPEVGRAIVQEVERQTGKLELIASENFVSPAVRAAQGSVLTHKYAEGYPGKRYYGGCEFVDVAENLAIDRACEIFGAQYANVQPHSGSQANMAVYFSALTPGDTILAMDLSHGGHLTHGSPVNFSGRFYNVVFYGVSRETGCIDYDSVAELAREHRPAMIVAGASAYSRIIDFARFRAIADEVGSLLMVDMAHIAGLVAAGLHPSPVGTAHFTTTTTHKTLRGPRGGMILSDEEAAKKLNSQIFPGIQGGPLMHVIAAKAVAFGEALRPEFGAYQKQVVANAAKLAATLTDAGFELVSGGTDNHLMLVDLTNKDITGKDAQHALDLAGITANKNTVPFETRSPFVTSGIRLGTPALTTRGMKEAEMVKVAGWIIDALGNIGNETRLAEISRDVEKFARQFPLFHW</sequence>
<name>GLYA_OLEA2</name>